<sequence>MASEFKKKLFWRAVVAEFLAMILFIFISIGSALGFHYPIKSNQTTGAVQDNVKVSLAFGLSIATLAQSVGHISGAHLNPAVTLGLLLSCQISILRAIMYIIAQCVGAIVATVILSGITSSLPDNSLGLNALAPGVNSGQGLGIEIIGTLQLVLCVLATTDRRRRRDLGDSGPLAIGFSVALGHLLAIDYTGCGINPARSFGSSVITHNFQDHWIFWVGPFIGAALAVLIYDFILAPRSSDLTDRVKVWTSGQVEEYDLDADDINSRVEMKPK</sequence>
<feature type="chain" id="PRO_0000063925" description="Aquaporin-1">
    <location>
        <begin position="1"/>
        <end position="272"/>
    </location>
</feature>
<feature type="topological domain" description="Cytoplasmic" evidence="6">
    <location>
        <begin position="1"/>
        <end position="11"/>
    </location>
</feature>
<feature type="transmembrane region" description="Helical; Name=Helix 1" evidence="2">
    <location>
        <begin position="12"/>
        <end position="29"/>
    </location>
</feature>
<feature type="topological domain" description="Extracellular" evidence="6">
    <location>
        <begin position="30"/>
        <end position="48"/>
    </location>
</feature>
<feature type="transmembrane region" description="Helical; Name=Helix 2" evidence="2">
    <location>
        <begin position="49"/>
        <end position="67"/>
    </location>
</feature>
<feature type="topological domain" description="Cytoplasmic" evidence="6">
    <location>
        <begin position="68"/>
        <end position="70"/>
    </location>
</feature>
<feature type="intramembrane region" evidence="2">
    <location>
        <begin position="71"/>
        <end position="84"/>
    </location>
</feature>
<feature type="topological domain" description="Cytoplasmic" evidence="6">
    <location>
        <begin position="85"/>
        <end position="92"/>
    </location>
</feature>
<feature type="transmembrane region" description="Helical; Name=Helix 3" evidence="2">
    <location>
        <begin position="93"/>
        <end position="111"/>
    </location>
</feature>
<feature type="topological domain" description="Extracellular" evidence="6">
    <location>
        <begin position="112"/>
        <end position="135"/>
    </location>
</feature>
<feature type="transmembrane region" description="Helical; Name=Helix 4" evidence="2">
    <location>
        <begin position="136"/>
        <end position="155"/>
    </location>
</feature>
<feature type="topological domain" description="Cytoplasmic" evidence="6">
    <location>
        <begin position="156"/>
        <end position="166"/>
    </location>
</feature>
<feature type="transmembrane region" description="Helical; Name=Helix 5" evidence="2">
    <location>
        <begin position="167"/>
        <end position="184"/>
    </location>
</feature>
<feature type="topological domain" description="Extracellular" evidence="6">
    <location>
        <begin position="185"/>
        <end position="189"/>
    </location>
</feature>
<feature type="intramembrane region" evidence="2">
    <location>
        <begin position="190"/>
        <end position="202"/>
    </location>
</feature>
<feature type="topological domain" description="Extracellular" evidence="6">
    <location>
        <begin position="203"/>
        <end position="209"/>
    </location>
</feature>
<feature type="transmembrane region" description="Helical; Name=Helix 6" evidence="2">
    <location>
        <begin position="210"/>
        <end position="227"/>
    </location>
</feature>
<feature type="topological domain" description="Cytoplasmic" evidence="6">
    <location>
        <begin position="228"/>
        <end position="272"/>
    </location>
</feature>
<feature type="short sequence motif" description="NPA 1" evidence="2">
    <location>
        <begin position="78"/>
        <end position="80"/>
    </location>
</feature>
<feature type="short sequence motif" description="NPA 2" evidence="2">
    <location>
        <begin position="195"/>
        <end position="197"/>
    </location>
</feature>
<feature type="modified residue" description="Phosphoserine" evidence="3">
    <location>
        <position position="250"/>
    </location>
</feature>
<feature type="modified residue" description="Phosphotyrosine" evidence="3">
    <location>
        <position position="256"/>
    </location>
</feature>
<feature type="modified residue" description="Phosphoserine" evidence="3">
    <location>
        <position position="265"/>
    </location>
</feature>
<feature type="glycosylation site" description="N-linked (GlcNAc...) asparagine" evidence="4">
    <location>
        <position position="42"/>
    </location>
</feature>
<comment type="function">
    <text evidence="2">Forms a water channel that facilitates the transport of water across cell membranes, playing a crucial role in water homeostasis in various tissues. Could also be permeable to small solutes including hydrogen peroxide, glycerol and gases such as amonnia (NH3), nitric oxide (NO) and carbon dioxide (CO2). Recruited to the ankyrin-1 complex, a multiprotein complex of the erythrocyte membrane, it could be part of a CO2 metabolon, linking facilitated diffusion of CO2 across the membrane, anion exchange of Cl(-)/HCO3(-) and interconversion of dissolved CO2 and carbonic acid in the cytosol. In vitro, it shows non-selective gated cation channel activity and may be permeable to cations like K(+) and Na(+) in vivo.</text>
</comment>
<comment type="catalytic activity">
    <reaction evidence="2">
        <text>H2O(in) = H2O(out)</text>
        <dbReference type="Rhea" id="RHEA:29667"/>
        <dbReference type="ChEBI" id="CHEBI:15377"/>
    </reaction>
</comment>
<comment type="catalytic activity">
    <reaction evidence="2">
        <text>nitric oxide(out) = nitric oxide(in)</text>
        <dbReference type="Rhea" id="RHEA:74895"/>
        <dbReference type="ChEBI" id="CHEBI:16480"/>
    </reaction>
</comment>
<comment type="catalytic activity">
    <reaction evidence="2">
        <text>CO2(out) = CO2(in)</text>
        <dbReference type="Rhea" id="RHEA:74891"/>
        <dbReference type="ChEBI" id="CHEBI:16526"/>
    </reaction>
</comment>
<comment type="catalytic activity">
    <reaction evidence="2">
        <text>glycerol(in) = glycerol(out)</text>
        <dbReference type="Rhea" id="RHEA:29675"/>
        <dbReference type="ChEBI" id="CHEBI:17754"/>
    </reaction>
</comment>
<comment type="catalytic activity">
    <reaction evidence="2">
        <text>H2O2(out) = H2O2(in)</text>
        <dbReference type="Rhea" id="RHEA:74375"/>
        <dbReference type="ChEBI" id="CHEBI:16240"/>
    </reaction>
</comment>
<comment type="catalytic activity">
    <reaction evidence="2">
        <text>K(+)(in) = K(+)(out)</text>
        <dbReference type="Rhea" id="RHEA:29463"/>
        <dbReference type="ChEBI" id="CHEBI:29103"/>
    </reaction>
</comment>
<comment type="catalytic activity">
    <reaction evidence="2">
        <text>Na(+)(in) = Na(+)(out)</text>
        <dbReference type="Rhea" id="RHEA:34963"/>
        <dbReference type="ChEBI" id="CHEBI:29101"/>
    </reaction>
</comment>
<comment type="subunit">
    <text evidence="1 2 3">Homotetramer; each monomer provides an independent water pore. Component of the ankyrin-1 complex in the erythrocyte, composed of ANK1, RHCE, RHAG, SLC4A1, EPB42, GYPA, GYPB and AQP1 (By similarity). Interacts with EPHB2; involved in endolymph production in the inner ear (By similarity). Identified in a complex with STOM. Interacts (via the N-terminal) with ANK1 (via ANK 1-5 repeats). Interacts (via the C-terminal) with EPB42 (By similarity).</text>
</comment>
<comment type="subcellular location">
    <subcellularLocation>
        <location evidence="2">Cell membrane</location>
        <topology evidence="2">Multi-pass membrane protein</topology>
    </subcellularLocation>
</comment>
<comment type="tissue specificity">
    <text evidence="5">Detected in fetal kidney (at protein level). Detected in fetal kidney.</text>
</comment>
<comment type="domain">
    <text evidence="2">Aquaporins contain two tandem repeats each containing three membrane-spanning domains and a pore-forming loop with the signature motif Asn-Pro-Ala (NPA).</text>
</comment>
<comment type="similarity">
    <text evidence="6">Belongs to the MIP/aquaporin (TC 1.A.8) family.</text>
</comment>
<proteinExistence type="evidence at protein level"/>
<evidence type="ECO:0000250" key="1"/>
<evidence type="ECO:0000250" key="2">
    <source>
        <dbReference type="UniProtKB" id="P29972"/>
    </source>
</evidence>
<evidence type="ECO:0000250" key="3">
    <source>
        <dbReference type="UniProtKB" id="Q02013"/>
    </source>
</evidence>
<evidence type="ECO:0000255" key="4"/>
<evidence type="ECO:0000269" key="5">
    <source>
    </source>
</evidence>
<evidence type="ECO:0000305" key="6"/>
<gene>
    <name evidence="2" type="primary">AQP1</name>
</gene>
<keyword id="KW-1003">Cell membrane</keyword>
<keyword id="KW-0325">Glycoprotein</keyword>
<keyword id="KW-0472">Membrane</keyword>
<keyword id="KW-0597">Phosphoprotein</keyword>
<keyword id="KW-1185">Reference proteome</keyword>
<keyword id="KW-0677">Repeat</keyword>
<keyword id="KW-0812">Transmembrane</keyword>
<keyword id="KW-1133">Transmembrane helix</keyword>
<keyword id="KW-0813">Transport</keyword>
<name>AQP1_SHEEP</name>
<protein>
    <recommendedName>
        <fullName evidence="2">Aquaporin-1</fullName>
        <shortName>AQP-1</shortName>
    </recommendedName>
    <alternativeName>
        <fullName>Aquaporin-CHIP</fullName>
    </alternativeName>
</protein>
<organism>
    <name type="scientific">Ovis aries</name>
    <name type="common">Sheep</name>
    <dbReference type="NCBI Taxonomy" id="9940"/>
    <lineage>
        <taxon>Eukaryota</taxon>
        <taxon>Metazoa</taxon>
        <taxon>Chordata</taxon>
        <taxon>Craniata</taxon>
        <taxon>Vertebrata</taxon>
        <taxon>Euteleostomi</taxon>
        <taxon>Mammalia</taxon>
        <taxon>Eutheria</taxon>
        <taxon>Laurasiatheria</taxon>
        <taxon>Artiodactyla</taxon>
        <taxon>Ruminantia</taxon>
        <taxon>Pecora</taxon>
        <taxon>Bovidae</taxon>
        <taxon>Caprinae</taxon>
        <taxon>Ovis</taxon>
    </lineage>
</organism>
<accession>P56401</accession>
<dbReference type="EMBL" id="AF009037">
    <property type="protein sequence ID" value="AAB63463.1"/>
    <property type="molecule type" value="mRNA"/>
</dbReference>
<dbReference type="RefSeq" id="NP_001009194.1">
    <property type="nucleotide sequence ID" value="NM_001009194.1"/>
</dbReference>
<dbReference type="SMR" id="P56401"/>
<dbReference type="STRING" id="9940.ENSOARP00000008340"/>
<dbReference type="GlyCosmos" id="P56401">
    <property type="glycosylation" value="1 site, No reported glycans"/>
</dbReference>
<dbReference type="PaxDb" id="9940-ENSOARP00000008340"/>
<dbReference type="GeneID" id="442999"/>
<dbReference type="KEGG" id="oas:442999"/>
<dbReference type="CTD" id="358"/>
<dbReference type="eggNOG" id="KOG0223">
    <property type="taxonomic scope" value="Eukaryota"/>
</dbReference>
<dbReference type="eggNOG" id="KOG2871">
    <property type="taxonomic scope" value="Eukaryota"/>
</dbReference>
<dbReference type="OrthoDB" id="3222at2759"/>
<dbReference type="Proteomes" id="UP000002356">
    <property type="component" value="Unplaced"/>
</dbReference>
<dbReference type="GO" id="GO:0170014">
    <property type="term" value="C:ankyrin-1 complex"/>
    <property type="evidence" value="ECO:0000250"/>
    <property type="project" value="UniProtKB"/>
</dbReference>
<dbReference type="GO" id="GO:0016324">
    <property type="term" value="C:apical plasma membrane"/>
    <property type="evidence" value="ECO:0000314"/>
    <property type="project" value="UniProtKB"/>
</dbReference>
<dbReference type="GO" id="GO:0009925">
    <property type="term" value="C:basal plasma membrane"/>
    <property type="evidence" value="ECO:0000250"/>
    <property type="project" value="UniProtKB"/>
</dbReference>
<dbReference type="GO" id="GO:0016323">
    <property type="term" value="C:basolateral plasma membrane"/>
    <property type="evidence" value="ECO:0000314"/>
    <property type="project" value="UniProtKB"/>
</dbReference>
<dbReference type="GO" id="GO:0005903">
    <property type="term" value="C:brush border"/>
    <property type="evidence" value="ECO:0000314"/>
    <property type="project" value="UniProtKB"/>
</dbReference>
<dbReference type="GO" id="GO:0031526">
    <property type="term" value="C:brush border membrane"/>
    <property type="evidence" value="ECO:0000250"/>
    <property type="project" value="UniProtKB"/>
</dbReference>
<dbReference type="GO" id="GO:0005737">
    <property type="term" value="C:cytoplasm"/>
    <property type="evidence" value="ECO:0000250"/>
    <property type="project" value="UniProtKB"/>
</dbReference>
<dbReference type="GO" id="GO:0031965">
    <property type="term" value="C:nuclear membrane"/>
    <property type="evidence" value="ECO:0000250"/>
    <property type="project" value="UniProtKB"/>
</dbReference>
<dbReference type="GO" id="GO:0005634">
    <property type="term" value="C:nucleus"/>
    <property type="evidence" value="ECO:0000250"/>
    <property type="project" value="UniProtKB"/>
</dbReference>
<dbReference type="GO" id="GO:0042383">
    <property type="term" value="C:sarcolemma"/>
    <property type="evidence" value="ECO:0000250"/>
    <property type="project" value="UniProtKB"/>
</dbReference>
<dbReference type="GO" id="GO:0008519">
    <property type="term" value="F:ammonium channel activity"/>
    <property type="evidence" value="ECO:0000250"/>
    <property type="project" value="UniProtKB"/>
</dbReference>
<dbReference type="GO" id="GO:0035379">
    <property type="term" value="F:carbon dioxide transmembrane transporter activity"/>
    <property type="evidence" value="ECO:0000250"/>
    <property type="project" value="UniProtKB"/>
</dbReference>
<dbReference type="GO" id="GO:0015168">
    <property type="term" value="F:glycerol transmembrane transporter activity"/>
    <property type="evidence" value="ECO:0000250"/>
    <property type="project" value="UniProtKB"/>
</dbReference>
<dbReference type="GO" id="GO:0005223">
    <property type="term" value="F:intracellularly cGMP-activated cation channel activity"/>
    <property type="evidence" value="ECO:0000250"/>
    <property type="project" value="UniProtKB"/>
</dbReference>
<dbReference type="GO" id="GO:0030184">
    <property type="term" value="F:nitric oxide transmembrane transporter activity"/>
    <property type="evidence" value="ECO:0000250"/>
    <property type="project" value="UniProtKB"/>
</dbReference>
<dbReference type="GO" id="GO:0005267">
    <property type="term" value="F:potassium channel activity"/>
    <property type="evidence" value="ECO:0000250"/>
    <property type="project" value="UniProtKB"/>
</dbReference>
<dbReference type="GO" id="GO:0022857">
    <property type="term" value="F:transmembrane transporter activity"/>
    <property type="evidence" value="ECO:0000250"/>
    <property type="project" value="UniProtKB"/>
</dbReference>
<dbReference type="GO" id="GO:0015250">
    <property type="term" value="F:water channel activity"/>
    <property type="evidence" value="ECO:0000250"/>
    <property type="project" value="UniProtKB"/>
</dbReference>
<dbReference type="GO" id="GO:0005372">
    <property type="term" value="F:water transmembrane transporter activity"/>
    <property type="evidence" value="ECO:0000250"/>
    <property type="project" value="UniProtKB"/>
</dbReference>
<dbReference type="GO" id="GO:0072488">
    <property type="term" value="P:ammonium transmembrane transport"/>
    <property type="evidence" value="ECO:0000250"/>
    <property type="project" value="UniProtKB"/>
</dbReference>
<dbReference type="GO" id="GO:0035378">
    <property type="term" value="P:carbon dioxide transmembrane transport"/>
    <property type="evidence" value="ECO:0000250"/>
    <property type="project" value="UniProtKB"/>
</dbReference>
<dbReference type="GO" id="GO:0015670">
    <property type="term" value="P:carbon dioxide transport"/>
    <property type="evidence" value="ECO:0000250"/>
    <property type="project" value="UniProtKB"/>
</dbReference>
<dbReference type="GO" id="GO:0006884">
    <property type="term" value="P:cell volume homeostasis"/>
    <property type="evidence" value="ECO:0000250"/>
    <property type="project" value="UniProtKB"/>
</dbReference>
<dbReference type="GO" id="GO:0019725">
    <property type="term" value="P:cellular homeostasis"/>
    <property type="evidence" value="ECO:0000250"/>
    <property type="project" value="UniProtKB"/>
</dbReference>
<dbReference type="GO" id="GO:0071474">
    <property type="term" value="P:cellular hyperosmotic response"/>
    <property type="evidence" value="ECO:0000250"/>
    <property type="project" value="UniProtKB"/>
</dbReference>
<dbReference type="GO" id="GO:0071320">
    <property type="term" value="P:cellular response to cAMP"/>
    <property type="evidence" value="ECO:0000250"/>
    <property type="project" value="UniProtKB"/>
</dbReference>
<dbReference type="GO" id="GO:0071280">
    <property type="term" value="P:cellular response to copper ion"/>
    <property type="evidence" value="ECO:0000250"/>
    <property type="project" value="UniProtKB"/>
</dbReference>
<dbReference type="GO" id="GO:0071549">
    <property type="term" value="P:cellular response to dexamethasone stimulus"/>
    <property type="evidence" value="ECO:0000250"/>
    <property type="project" value="UniProtKB"/>
</dbReference>
<dbReference type="GO" id="GO:0070301">
    <property type="term" value="P:cellular response to hydrogen peroxide"/>
    <property type="evidence" value="ECO:0000250"/>
    <property type="project" value="UniProtKB"/>
</dbReference>
<dbReference type="GO" id="GO:0071456">
    <property type="term" value="P:cellular response to hypoxia"/>
    <property type="evidence" value="ECO:0000250"/>
    <property type="project" value="UniProtKB"/>
</dbReference>
<dbReference type="GO" id="GO:0071260">
    <property type="term" value="P:cellular response to mechanical stimulus"/>
    <property type="evidence" value="ECO:0000250"/>
    <property type="project" value="UniProtKB"/>
</dbReference>
<dbReference type="GO" id="GO:0071288">
    <property type="term" value="P:cellular response to mercury ion"/>
    <property type="evidence" value="ECO:0000250"/>
    <property type="project" value="UniProtKB"/>
</dbReference>
<dbReference type="GO" id="GO:0071300">
    <property type="term" value="P:cellular response to retinoic acid"/>
    <property type="evidence" value="ECO:0000250"/>
    <property type="project" value="UniProtKB"/>
</dbReference>
<dbReference type="GO" id="GO:0071472">
    <property type="term" value="P:cellular response to salt stress"/>
    <property type="evidence" value="ECO:0000250"/>
    <property type="project" value="UniProtKB"/>
</dbReference>
<dbReference type="GO" id="GO:0034644">
    <property type="term" value="P:cellular response to UV"/>
    <property type="evidence" value="ECO:0000250"/>
    <property type="project" value="UniProtKB"/>
</dbReference>
<dbReference type="GO" id="GO:0019934">
    <property type="term" value="P:cGMP-mediated signaling"/>
    <property type="evidence" value="ECO:0000250"/>
    <property type="project" value="UniProtKB"/>
</dbReference>
<dbReference type="GO" id="GO:0030950">
    <property type="term" value="P:establishment or maintenance of actin cytoskeleton polarity"/>
    <property type="evidence" value="ECO:0000250"/>
    <property type="project" value="UniProtKB"/>
</dbReference>
<dbReference type="GO" id="GO:0015793">
    <property type="term" value="P:glycerol transmembrane transport"/>
    <property type="evidence" value="ECO:0000250"/>
    <property type="project" value="UniProtKB"/>
</dbReference>
<dbReference type="GO" id="GO:0009992">
    <property type="term" value="P:intracellular water homeostasis"/>
    <property type="evidence" value="ECO:0000250"/>
    <property type="project" value="UniProtKB"/>
</dbReference>
<dbReference type="GO" id="GO:0021670">
    <property type="term" value="P:lateral ventricle development"/>
    <property type="evidence" value="ECO:0000270"/>
    <property type="project" value="UniProtKB"/>
</dbReference>
<dbReference type="GO" id="GO:0043066">
    <property type="term" value="P:negative regulation of apoptotic process"/>
    <property type="evidence" value="ECO:0000250"/>
    <property type="project" value="UniProtKB"/>
</dbReference>
<dbReference type="GO" id="GO:0030185">
    <property type="term" value="P:nitric oxide transport"/>
    <property type="evidence" value="ECO:0000250"/>
    <property type="project" value="UniProtKB"/>
</dbReference>
<dbReference type="GO" id="GO:0045766">
    <property type="term" value="P:positive regulation of angiogenesis"/>
    <property type="evidence" value="ECO:0000250"/>
    <property type="project" value="UniProtKB"/>
</dbReference>
<dbReference type="GO" id="GO:0048146">
    <property type="term" value="P:positive regulation of fibroblast proliferation"/>
    <property type="evidence" value="ECO:0000250"/>
    <property type="project" value="UniProtKB"/>
</dbReference>
<dbReference type="GO" id="GO:0046878">
    <property type="term" value="P:positive regulation of saliva secretion"/>
    <property type="evidence" value="ECO:0000250"/>
    <property type="project" value="UniProtKB"/>
</dbReference>
<dbReference type="GO" id="GO:0003097">
    <property type="term" value="P:renal water transport"/>
    <property type="evidence" value="ECO:0000250"/>
    <property type="project" value="UniProtKB"/>
</dbReference>
<dbReference type="GO" id="GO:0035377">
    <property type="term" value="P:transepithelial water transport"/>
    <property type="evidence" value="ECO:0000250"/>
    <property type="project" value="UniProtKB"/>
</dbReference>
<dbReference type="GO" id="GO:0006833">
    <property type="term" value="P:water transport"/>
    <property type="evidence" value="ECO:0000250"/>
    <property type="project" value="UniProtKB"/>
</dbReference>
<dbReference type="CDD" id="cd00333">
    <property type="entry name" value="MIP"/>
    <property type="match status" value="1"/>
</dbReference>
<dbReference type="FunFam" id="1.20.1080.10:FF:000012">
    <property type="entry name" value="Aquaporin-1"/>
    <property type="match status" value="1"/>
</dbReference>
<dbReference type="Gene3D" id="1.20.1080.10">
    <property type="entry name" value="Glycerol uptake facilitator protein"/>
    <property type="match status" value="1"/>
</dbReference>
<dbReference type="InterPro" id="IPR023271">
    <property type="entry name" value="Aquaporin-like"/>
</dbReference>
<dbReference type="InterPro" id="IPR023274">
    <property type="entry name" value="Aquaporin_1"/>
</dbReference>
<dbReference type="InterPro" id="IPR034294">
    <property type="entry name" value="Aquaporin_transptr"/>
</dbReference>
<dbReference type="InterPro" id="IPR000425">
    <property type="entry name" value="MIP"/>
</dbReference>
<dbReference type="InterPro" id="IPR022357">
    <property type="entry name" value="MIP_CS"/>
</dbReference>
<dbReference type="NCBIfam" id="TIGR00861">
    <property type="entry name" value="MIP"/>
    <property type="match status" value="1"/>
</dbReference>
<dbReference type="PANTHER" id="PTHR19139">
    <property type="entry name" value="AQUAPORIN TRANSPORTER"/>
    <property type="match status" value="1"/>
</dbReference>
<dbReference type="PANTHER" id="PTHR19139:SF161">
    <property type="entry name" value="AQUAPORIN-1"/>
    <property type="match status" value="1"/>
</dbReference>
<dbReference type="Pfam" id="PF00230">
    <property type="entry name" value="MIP"/>
    <property type="match status" value="1"/>
</dbReference>
<dbReference type="PRINTS" id="PR02013">
    <property type="entry name" value="AQUAPORIN1"/>
</dbReference>
<dbReference type="PRINTS" id="PR00783">
    <property type="entry name" value="MINTRINSICP"/>
</dbReference>
<dbReference type="SUPFAM" id="SSF81338">
    <property type="entry name" value="Aquaporin-like"/>
    <property type="match status" value="1"/>
</dbReference>
<dbReference type="PROSITE" id="PS00221">
    <property type="entry name" value="MIP"/>
    <property type="match status" value="1"/>
</dbReference>
<reference key="1">
    <citation type="journal article" date="1998" name="Pediatr. Nephrol.">
        <title>Ovine AQP1: cDNA cloning, ontogeny, and control of renal gene expression.</title>
        <authorList>
            <person name="Wintour E.M."/>
            <person name="Earnest L."/>
            <person name="Alcorn D."/>
            <person name="Butkus A."/>
            <person name="Shandley L."/>
            <person name="Jeyaseelan K."/>
        </authorList>
    </citation>
    <scope>NUCLEOTIDE SEQUENCE [MRNA]</scope>
    <scope>TISSUE SPECIFICITY</scope>
</reference>